<accession>A1QZF9</accession>
<sequence length="406" mass="45776">MNLALEILEKRGFLKQCTNLEALSTLMDKERVVFYVGVDATSTSLHIGHLIPFMVMAHLQRQGHIPIALVGGGTTKIGDPSGKDAMRKILSKEDIEKNVKAIRAQLLRIIDFSHGYILDNSAWLDNINYIEFLRDIGVCFSVNRMLGFETYKRRIKDGLSFIEFNYQLLQSYDFYMLNKIKNCKLQIGGDDQWGNIVSGVDLIKKKLGTEVFGLTLPLITRSDGKKMGKSEKGAVYLDAELYSVYDFYQYFRNVPDLDVKNFLYLFTFLGDDEIEHMSSVKGYLLNKAKETLAFEITKIVHGEDAALKASSAARAAFKGSEGDRADIPFFKLALDSLEGSILLIDLMVLSKVVSSKSEARRLINSGGVYIDKVRIGDQDYCLNKDNFINGEIELKIGKKRILRVIL</sequence>
<evidence type="ECO:0000255" key="1">
    <source>
        <dbReference type="HAMAP-Rule" id="MF_02006"/>
    </source>
</evidence>
<proteinExistence type="inferred from homology"/>
<organism>
    <name type="scientific">Borrelia turicatae (strain 91E135)</name>
    <dbReference type="NCBI Taxonomy" id="314724"/>
    <lineage>
        <taxon>Bacteria</taxon>
        <taxon>Pseudomonadati</taxon>
        <taxon>Spirochaetota</taxon>
        <taxon>Spirochaetia</taxon>
        <taxon>Spirochaetales</taxon>
        <taxon>Borreliaceae</taxon>
        <taxon>Borrelia</taxon>
    </lineage>
</organism>
<name>SYY_BORT9</name>
<protein>
    <recommendedName>
        <fullName evidence="1">Tyrosine--tRNA ligase</fullName>
        <ecNumber evidence="1">6.1.1.1</ecNumber>
    </recommendedName>
    <alternativeName>
        <fullName evidence="1">Tyrosyl-tRNA synthetase</fullName>
        <shortName evidence="1">TyrRS</shortName>
    </alternativeName>
</protein>
<keyword id="KW-0030">Aminoacyl-tRNA synthetase</keyword>
<keyword id="KW-0067">ATP-binding</keyword>
<keyword id="KW-0963">Cytoplasm</keyword>
<keyword id="KW-0436">Ligase</keyword>
<keyword id="KW-0547">Nucleotide-binding</keyword>
<keyword id="KW-0648">Protein biosynthesis</keyword>
<keyword id="KW-1185">Reference proteome</keyword>
<keyword id="KW-0694">RNA-binding</keyword>
<comment type="function">
    <text evidence="1">Catalyzes the attachment of tyrosine to tRNA(Tyr) in a two-step reaction: tyrosine is first activated by ATP to form Tyr-AMP and then transferred to the acceptor end of tRNA(Tyr).</text>
</comment>
<comment type="catalytic activity">
    <reaction evidence="1">
        <text>tRNA(Tyr) + L-tyrosine + ATP = L-tyrosyl-tRNA(Tyr) + AMP + diphosphate + H(+)</text>
        <dbReference type="Rhea" id="RHEA:10220"/>
        <dbReference type="Rhea" id="RHEA-COMP:9706"/>
        <dbReference type="Rhea" id="RHEA-COMP:9707"/>
        <dbReference type="ChEBI" id="CHEBI:15378"/>
        <dbReference type="ChEBI" id="CHEBI:30616"/>
        <dbReference type="ChEBI" id="CHEBI:33019"/>
        <dbReference type="ChEBI" id="CHEBI:58315"/>
        <dbReference type="ChEBI" id="CHEBI:78442"/>
        <dbReference type="ChEBI" id="CHEBI:78536"/>
        <dbReference type="ChEBI" id="CHEBI:456215"/>
        <dbReference type="EC" id="6.1.1.1"/>
    </reaction>
</comment>
<comment type="subunit">
    <text evidence="1">Homodimer.</text>
</comment>
<comment type="subcellular location">
    <subcellularLocation>
        <location evidence="1">Cytoplasm</location>
    </subcellularLocation>
</comment>
<comment type="similarity">
    <text evidence="1">Belongs to the class-I aminoacyl-tRNA synthetase family. TyrS type 1 subfamily.</text>
</comment>
<dbReference type="EC" id="6.1.1.1" evidence="1"/>
<dbReference type="EMBL" id="CP000049">
    <property type="protein sequence ID" value="AAX17701.1"/>
    <property type="molecule type" value="Genomic_DNA"/>
</dbReference>
<dbReference type="RefSeq" id="WP_011772320.1">
    <property type="nucleotide sequence ID" value="NC_008710.1"/>
</dbReference>
<dbReference type="SMR" id="A1QZF9"/>
<dbReference type="KEGG" id="btu:BT0370"/>
<dbReference type="eggNOG" id="COG0162">
    <property type="taxonomic scope" value="Bacteria"/>
</dbReference>
<dbReference type="HOGENOM" id="CLU_024003_0_3_12"/>
<dbReference type="Proteomes" id="UP000001205">
    <property type="component" value="Chromosome"/>
</dbReference>
<dbReference type="GO" id="GO:0005829">
    <property type="term" value="C:cytosol"/>
    <property type="evidence" value="ECO:0007669"/>
    <property type="project" value="TreeGrafter"/>
</dbReference>
<dbReference type="GO" id="GO:0005524">
    <property type="term" value="F:ATP binding"/>
    <property type="evidence" value="ECO:0007669"/>
    <property type="project" value="UniProtKB-UniRule"/>
</dbReference>
<dbReference type="GO" id="GO:0003723">
    <property type="term" value="F:RNA binding"/>
    <property type="evidence" value="ECO:0007669"/>
    <property type="project" value="UniProtKB-KW"/>
</dbReference>
<dbReference type="GO" id="GO:0004831">
    <property type="term" value="F:tyrosine-tRNA ligase activity"/>
    <property type="evidence" value="ECO:0007669"/>
    <property type="project" value="UniProtKB-UniRule"/>
</dbReference>
<dbReference type="GO" id="GO:0006437">
    <property type="term" value="P:tyrosyl-tRNA aminoacylation"/>
    <property type="evidence" value="ECO:0007669"/>
    <property type="project" value="UniProtKB-UniRule"/>
</dbReference>
<dbReference type="CDD" id="cd00165">
    <property type="entry name" value="S4"/>
    <property type="match status" value="1"/>
</dbReference>
<dbReference type="CDD" id="cd00805">
    <property type="entry name" value="TyrRS_core"/>
    <property type="match status" value="1"/>
</dbReference>
<dbReference type="FunFam" id="1.10.240.10:FF:000001">
    <property type="entry name" value="Tyrosine--tRNA ligase"/>
    <property type="match status" value="1"/>
</dbReference>
<dbReference type="Gene3D" id="3.40.50.620">
    <property type="entry name" value="HUPs"/>
    <property type="match status" value="1"/>
</dbReference>
<dbReference type="Gene3D" id="3.10.290.10">
    <property type="entry name" value="RNA-binding S4 domain"/>
    <property type="match status" value="1"/>
</dbReference>
<dbReference type="Gene3D" id="1.10.240.10">
    <property type="entry name" value="Tyrosyl-Transfer RNA Synthetase"/>
    <property type="match status" value="1"/>
</dbReference>
<dbReference type="HAMAP" id="MF_02006">
    <property type="entry name" value="Tyr_tRNA_synth_type1"/>
    <property type="match status" value="1"/>
</dbReference>
<dbReference type="InterPro" id="IPR002305">
    <property type="entry name" value="aa-tRNA-synth_Ic"/>
</dbReference>
<dbReference type="InterPro" id="IPR014729">
    <property type="entry name" value="Rossmann-like_a/b/a_fold"/>
</dbReference>
<dbReference type="InterPro" id="IPR002942">
    <property type="entry name" value="S4_RNA-bd"/>
</dbReference>
<dbReference type="InterPro" id="IPR036986">
    <property type="entry name" value="S4_RNA-bd_sf"/>
</dbReference>
<dbReference type="InterPro" id="IPR054608">
    <property type="entry name" value="SYY-like_C"/>
</dbReference>
<dbReference type="InterPro" id="IPR002307">
    <property type="entry name" value="Tyr-tRNA-ligase"/>
</dbReference>
<dbReference type="InterPro" id="IPR024088">
    <property type="entry name" value="Tyr-tRNA-ligase_bac-type"/>
</dbReference>
<dbReference type="InterPro" id="IPR024107">
    <property type="entry name" value="Tyr-tRNA-ligase_bac_1"/>
</dbReference>
<dbReference type="NCBIfam" id="TIGR00234">
    <property type="entry name" value="tyrS"/>
    <property type="match status" value="1"/>
</dbReference>
<dbReference type="PANTHER" id="PTHR11766:SF0">
    <property type="entry name" value="TYROSINE--TRNA LIGASE, MITOCHONDRIAL"/>
    <property type="match status" value="1"/>
</dbReference>
<dbReference type="PANTHER" id="PTHR11766">
    <property type="entry name" value="TYROSYL-TRNA SYNTHETASE"/>
    <property type="match status" value="1"/>
</dbReference>
<dbReference type="Pfam" id="PF22421">
    <property type="entry name" value="SYY_C-terminal"/>
    <property type="match status" value="1"/>
</dbReference>
<dbReference type="Pfam" id="PF00579">
    <property type="entry name" value="tRNA-synt_1b"/>
    <property type="match status" value="1"/>
</dbReference>
<dbReference type="PRINTS" id="PR01040">
    <property type="entry name" value="TRNASYNTHTYR"/>
</dbReference>
<dbReference type="SMART" id="SM00363">
    <property type="entry name" value="S4"/>
    <property type="match status" value="1"/>
</dbReference>
<dbReference type="SUPFAM" id="SSF55174">
    <property type="entry name" value="Alpha-L RNA-binding motif"/>
    <property type="match status" value="1"/>
</dbReference>
<dbReference type="SUPFAM" id="SSF52374">
    <property type="entry name" value="Nucleotidylyl transferase"/>
    <property type="match status" value="1"/>
</dbReference>
<dbReference type="PROSITE" id="PS50889">
    <property type="entry name" value="S4"/>
    <property type="match status" value="1"/>
</dbReference>
<gene>
    <name evidence="1" type="primary">tyrS</name>
    <name type="ordered locus">BT0370</name>
</gene>
<feature type="chain" id="PRO_1000189265" description="Tyrosine--tRNA ligase">
    <location>
        <begin position="1"/>
        <end position="406"/>
    </location>
</feature>
<feature type="domain" description="S4 RNA-binding" evidence="1">
    <location>
        <begin position="341"/>
        <end position="405"/>
    </location>
</feature>
<feature type="short sequence motif" description="'HIGH' region">
    <location>
        <begin position="40"/>
        <end position="49"/>
    </location>
</feature>
<feature type="short sequence motif" description="'KMSKS' region">
    <location>
        <begin position="226"/>
        <end position="230"/>
    </location>
</feature>
<feature type="binding site" evidence="1">
    <location>
        <position position="35"/>
    </location>
    <ligand>
        <name>L-tyrosine</name>
        <dbReference type="ChEBI" id="CHEBI:58315"/>
    </ligand>
</feature>
<feature type="binding site" evidence="1">
    <location>
        <position position="166"/>
    </location>
    <ligand>
        <name>L-tyrosine</name>
        <dbReference type="ChEBI" id="CHEBI:58315"/>
    </ligand>
</feature>
<feature type="binding site" evidence="1">
    <location>
        <position position="170"/>
    </location>
    <ligand>
        <name>L-tyrosine</name>
        <dbReference type="ChEBI" id="CHEBI:58315"/>
    </ligand>
</feature>
<feature type="binding site" evidence="1">
    <location>
        <position position="229"/>
    </location>
    <ligand>
        <name>ATP</name>
        <dbReference type="ChEBI" id="CHEBI:30616"/>
    </ligand>
</feature>
<reference key="1">
    <citation type="submission" date="2004-12" db="EMBL/GenBank/DDBJ databases">
        <title>The genome sequence of Borrelia hermsii and Borrelia turicatae: comparative analysis of two agents of endemic N. America relapsing fever.</title>
        <authorList>
            <person name="Porcella S.F."/>
            <person name="Raffel S.J."/>
            <person name="Schrumpf M.E."/>
            <person name="Montgomery B."/>
            <person name="Smith T."/>
            <person name="Schwan T.G."/>
        </authorList>
    </citation>
    <scope>NUCLEOTIDE SEQUENCE [LARGE SCALE GENOMIC DNA]</scope>
    <source>
        <strain>91E135</strain>
    </source>
</reference>